<proteinExistence type="inferred from homology"/>
<organism>
    <name type="scientific">Prochlorococcus marinus (strain MIT 9312)</name>
    <dbReference type="NCBI Taxonomy" id="74546"/>
    <lineage>
        <taxon>Bacteria</taxon>
        <taxon>Bacillati</taxon>
        <taxon>Cyanobacteriota</taxon>
        <taxon>Cyanophyceae</taxon>
        <taxon>Synechococcales</taxon>
        <taxon>Prochlorococcaceae</taxon>
        <taxon>Prochlorococcus</taxon>
    </lineage>
</organism>
<evidence type="ECO:0000255" key="1">
    <source>
        <dbReference type="HAMAP-Rule" id="MF_00074"/>
    </source>
</evidence>
<keyword id="KW-0963">Cytoplasm</keyword>
<keyword id="KW-0489">Methyltransferase</keyword>
<keyword id="KW-0698">rRNA processing</keyword>
<keyword id="KW-0949">S-adenosyl-L-methionine</keyword>
<keyword id="KW-0808">Transferase</keyword>
<accession>Q318R7</accession>
<name>RSMG_PROM9</name>
<feature type="chain" id="PRO_1000010180" description="Ribosomal RNA small subunit methyltransferase G">
    <location>
        <begin position="1"/>
        <end position="237"/>
    </location>
</feature>
<feature type="binding site" evidence="1">
    <location>
        <position position="76"/>
    </location>
    <ligand>
        <name>S-adenosyl-L-methionine</name>
        <dbReference type="ChEBI" id="CHEBI:59789"/>
    </ligand>
</feature>
<feature type="binding site" evidence="1">
    <location>
        <position position="81"/>
    </location>
    <ligand>
        <name>S-adenosyl-L-methionine</name>
        <dbReference type="ChEBI" id="CHEBI:59789"/>
    </ligand>
</feature>
<feature type="binding site" evidence="1">
    <location>
        <begin position="99"/>
        <end position="101"/>
    </location>
    <ligand>
        <name>S-adenosyl-L-methionine</name>
        <dbReference type="ChEBI" id="CHEBI:59789"/>
    </ligand>
</feature>
<feature type="binding site" evidence="1">
    <location>
        <begin position="128"/>
        <end position="129"/>
    </location>
    <ligand>
        <name>S-adenosyl-L-methionine</name>
        <dbReference type="ChEBI" id="CHEBI:59789"/>
    </ligand>
</feature>
<feature type="binding site" evidence="1">
    <location>
        <position position="147"/>
    </location>
    <ligand>
        <name>S-adenosyl-L-methionine</name>
        <dbReference type="ChEBI" id="CHEBI:59789"/>
    </ligand>
</feature>
<reference key="1">
    <citation type="journal article" date="2006" name="Science">
        <title>Genomic islands and the ecology and evolution of Prochlorococcus.</title>
        <authorList>
            <person name="Coleman M.L."/>
            <person name="Sullivan M.B."/>
            <person name="Martiny A.C."/>
            <person name="Steglich C."/>
            <person name="Barry K."/>
            <person name="Delong E.F."/>
            <person name="Chisholm S.W."/>
        </authorList>
    </citation>
    <scope>NUCLEOTIDE SEQUENCE [LARGE SCALE GENOMIC DNA]</scope>
    <source>
        <strain>MIT 9312</strain>
    </source>
</reference>
<dbReference type="EC" id="2.1.1.-" evidence="1"/>
<dbReference type="EMBL" id="CP000111">
    <property type="protein sequence ID" value="ABB50628.1"/>
    <property type="molecule type" value="Genomic_DNA"/>
</dbReference>
<dbReference type="RefSeq" id="WP_011377110.1">
    <property type="nucleotide sequence ID" value="NC_007577.1"/>
</dbReference>
<dbReference type="SMR" id="Q318R7"/>
<dbReference type="STRING" id="74546.PMT9312_1568"/>
<dbReference type="KEGG" id="pmi:PMT9312_1568"/>
<dbReference type="eggNOG" id="COG0357">
    <property type="taxonomic scope" value="Bacteria"/>
</dbReference>
<dbReference type="HOGENOM" id="CLU_065341_0_2_3"/>
<dbReference type="OrthoDB" id="9808773at2"/>
<dbReference type="Proteomes" id="UP000002715">
    <property type="component" value="Chromosome"/>
</dbReference>
<dbReference type="GO" id="GO:0005829">
    <property type="term" value="C:cytosol"/>
    <property type="evidence" value="ECO:0007669"/>
    <property type="project" value="TreeGrafter"/>
</dbReference>
<dbReference type="GO" id="GO:0070043">
    <property type="term" value="F:rRNA (guanine-N7-)-methyltransferase activity"/>
    <property type="evidence" value="ECO:0007669"/>
    <property type="project" value="UniProtKB-UniRule"/>
</dbReference>
<dbReference type="Gene3D" id="3.40.50.150">
    <property type="entry name" value="Vaccinia Virus protein VP39"/>
    <property type="match status" value="1"/>
</dbReference>
<dbReference type="HAMAP" id="MF_00074">
    <property type="entry name" value="16SrRNA_methyltr_G"/>
    <property type="match status" value="1"/>
</dbReference>
<dbReference type="InterPro" id="IPR003682">
    <property type="entry name" value="rRNA_ssu_MeTfrase_G"/>
</dbReference>
<dbReference type="InterPro" id="IPR029063">
    <property type="entry name" value="SAM-dependent_MTases_sf"/>
</dbReference>
<dbReference type="NCBIfam" id="TIGR00138">
    <property type="entry name" value="rsmG_gidB"/>
    <property type="match status" value="1"/>
</dbReference>
<dbReference type="PANTHER" id="PTHR31760">
    <property type="entry name" value="S-ADENOSYL-L-METHIONINE-DEPENDENT METHYLTRANSFERASES SUPERFAMILY PROTEIN"/>
    <property type="match status" value="1"/>
</dbReference>
<dbReference type="PANTHER" id="PTHR31760:SF0">
    <property type="entry name" value="S-ADENOSYL-L-METHIONINE-DEPENDENT METHYLTRANSFERASES SUPERFAMILY PROTEIN"/>
    <property type="match status" value="1"/>
</dbReference>
<dbReference type="Pfam" id="PF02527">
    <property type="entry name" value="GidB"/>
    <property type="match status" value="1"/>
</dbReference>
<dbReference type="PIRSF" id="PIRSF003078">
    <property type="entry name" value="GidB"/>
    <property type="match status" value="1"/>
</dbReference>
<dbReference type="SUPFAM" id="SSF53335">
    <property type="entry name" value="S-adenosyl-L-methionine-dependent methyltransferases"/>
    <property type="match status" value="1"/>
</dbReference>
<comment type="function">
    <text evidence="1">Specifically methylates the N7 position of a guanine in 16S rRNA.</text>
</comment>
<comment type="subcellular location">
    <subcellularLocation>
        <location evidence="1">Cytoplasm</location>
    </subcellularLocation>
</comment>
<comment type="similarity">
    <text evidence="1">Belongs to the methyltransferase superfamily. RNA methyltransferase RsmG family.</text>
</comment>
<protein>
    <recommendedName>
        <fullName evidence="1">Ribosomal RNA small subunit methyltransferase G</fullName>
        <ecNumber evidence="1">2.1.1.-</ecNumber>
    </recommendedName>
    <alternativeName>
        <fullName evidence="1">16S rRNA 7-methylguanosine methyltransferase</fullName>
        <shortName evidence="1">16S rRNA m7G methyltransferase</shortName>
    </alternativeName>
</protein>
<gene>
    <name evidence="1" type="primary">rsmG</name>
    <name type="ordered locus">PMT9312_1568</name>
</gene>
<sequence>MKKQNIPKEISEFITKEEIVMFQELQIKIAELNNKTNLTRLIKGDDYWISQVFDSIWPFKTFPNINFDNKKFLDIGSGCGFPGLAYAITHPNSEIYLIDSSKKKTDALKLLIKEINFKNNIHIINDRIENLAHQSSMRNSFNIATTRAVSNPSTVSEYILPMLKKEGLGVLYCGKWTDEENKNLDKTLEILEGKFKETKKILLPRSKGTRNIILIQPKNLCPEIYPRKIGKPEKHPL</sequence>